<proteinExistence type="evidence at protein level"/>
<feature type="signal peptide" evidence="3">
    <location>
        <begin position="1"/>
        <end position="16"/>
    </location>
</feature>
<feature type="chain" id="PRO_5001339409" description="Phospholipase A2 homolog">
    <location>
        <begin position="17"/>
        <end position="138"/>
    </location>
</feature>
<feature type="region of interest" description="Important for membrane-damaging activities in eukaryotes and bacteria; heparin-binding" evidence="1">
    <location>
        <begin position="121"/>
        <end position="133"/>
    </location>
</feature>
<feature type="disulfide bond" evidence="2">
    <location>
        <begin position="42"/>
        <end position="131"/>
    </location>
</feature>
<feature type="disulfide bond" evidence="2">
    <location>
        <begin position="44"/>
        <end position="60"/>
    </location>
</feature>
<feature type="disulfide bond" evidence="2">
    <location>
        <begin position="59"/>
        <end position="111"/>
    </location>
</feature>
<feature type="disulfide bond" evidence="2">
    <location>
        <begin position="65"/>
        <end position="138"/>
    </location>
</feature>
<feature type="disulfide bond" evidence="2">
    <location>
        <begin position="66"/>
        <end position="104"/>
    </location>
</feature>
<feature type="disulfide bond" evidence="2">
    <location>
        <begin position="73"/>
        <end position="97"/>
    </location>
</feature>
<feature type="disulfide bond" evidence="2">
    <location>
        <begin position="91"/>
        <end position="102"/>
    </location>
</feature>
<accession>B5U6Y4</accession>
<name>PA2HS_ECHOC</name>
<keyword id="KW-1015">Disulfide bond</keyword>
<keyword id="KW-0959">Myotoxin</keyword>
<keyword id="KW-0964">Secreted</keyword>
<keyword id="KW-0732">Signal</keyword>
<keyword id="KW-0800">Toxin</keyword>
<reference key="1">
    <citation type="submission" date="2008-06" db="EMBL/GenBank/DDBJ databases">
        <title>Snake venomics and transcriptomics of the ocellated carpet viper, Echis ocellatus.</title>
        <authorList>
            <person name="Wagstaff S.C."/>
            <person name="Sanz L."/>
            <person name="Juarez P."/>
            <person name="Harrison R.A."/>
            <person name="Calvete J.J."/>
        </authorList>
    </citation>
    <scope>NUCLEOTIDE SEQUENCE [MRNA]</scope>
    <source>
        <tissue>Venom gland</tissue>
    </source>
</reference>
<reference key="2">
    <citation type="journal article" date="2013" name="Toxicon">
        <title>Cytotoxic activities of [Ser49]phospholipase A(2) from the venom of the saw-scaled vipers Echis ocellatus, Echis pyramidum leakeyi, Echis carinatus sochureki, and Echis coloratus.</title>
        <authorList>
            <person name="Conlon J.M."/>
            <person name="Attoub S."/>
            <person name="Arafat H."/>
            <person name="Mechkarska M."/>
            <person name="Casewell N.R."/>
            <person name="Harrison R.A."/>
            <person name="Calvete J.J."/>
        </authorList>
    </citation>
    <scope>FUNCTION</scope>
    <scope>MASS SPECTROMETRY</scope>
    <scope>SUBCELLULAR LOCATION</scope>
    <source>
        <tissue>Venom</tissue>
    </source>
</reference>
<protein>
    <recommendedName>
        <fullName>Phospholipase A2 homolog</fullName>
        <shortName>svPLA2 homolog</shortName>
    </recommendedName>
    <alternativeName>
        <fullName>PLA2-Eoc15</fullName>
    </alternativeName>
</protein>
<comment type="function">
    <text evidence="2 3">Snake venom phospholipase A2 homolog that lacks enzymatic activity. Shows high myotoxin activities and displays edema-inducing activities (By similarity). Has cytotoxic activities against HUVEC cells (LC(50)=5.0 uL) and human lung adenocarcinoma A549 cells (LC(50)=5.2 uL).</text>
</comment>
<comment type="subunit">
    <text evidence="2">Monomer.</text>
</comment>
<comment type="subcellular location">
    <subcellularLocation>
        <location evidence="3">Secreted</location>
    </subcellularLocation>
</comment>
<comment type="tissue specificity">
    <text evidence="5">Expressed by the venom gland.</text>
</comment>
<comment type="mass spectrometry"/>
<comment type="miscellaneous">
    <text evidence="3">Negative results: does not show antimicrobial activity against E.coli and S.aureus and does not produce appreciable hemolysis on human erythrocytes (PubMed:23747272).</text>
</comment>
<comment type="similarity">
    <text evidence="4">Belongs to the phospholipase A2 family. Group II subfamily. S49 sub-subfamily.</text>
</comment>
<comment type="caution">
    <text evidence="4">Does not bind calcium as one of the calcium-binding sites is lost (Asp-&gt;Ser in position 64, which corresponds to 'Ser-49' in the current nomenclature).</text>
</comment>
<sequence>MRALWIVAVWLIGVEGSVVELGKMIIQETGKSPFPSYTSYGCFCGGGEKGTPKDATDRCCFVHSCCYDKLPDCSPKTDRYKYQRENGEIICENSTSCKKRICECDKAVAVCLRENLQTYNKKYTYYPNFLCKGEPEKC</sequence>
<evidence type="ECO:0000250" key="1">
    <source>
        <dbReference type="UniProtKB" id="P24605"/>
    </source>
</evidence>
<evidence type="ECO:0000250" key="2">
    <source>
        <dbReference type="UniProtKB" id="P48650"/>
    </source>
</evidence>
<evidence type="ECO:0000269" key="3">
    <source>
    </source>
</evidence>
<evidence type="ECO:0000305" key="4"/>
<evidence type="ECO:0000305" key="5">
    <source>
    </source>
</evidence>
<organism>
    <name type="scientific">Echis ocellatus</name>
    <name type="common">Ocellated saw-scaled viper</name>
    <dbReference type="NCBI Taxonomy" id="99586"/>
    <lineage>
        <taxon>Eukaryota</taxon>
        <taxon>Metazoa</taxon>
        <taxon>Chordata</taxon>
        <taxon>Craniata</taxon>
        <taxon>Vertebrata</taxon>
        <taxon>Euteleostomi</taxon>
        <taxon>Lepidosauria</taxon>
        <taxon>Squamata</taxon>
        <taxon>Bifurcata</taxon>
        <taxon>Unidentata</taxon>
        <taxon>Episquamata</taxon>
        <taxon>Toxicofera</taxon>
        <taxon>Serpentes</taxon>
        <taxon>Colubroidea</taxon>
        <taxon>Viperidae</taxon>
        <taxon>Viperinae</taxon>
        <taxon>Echis</taxon>
    </lineage>
</organism>
<dbReference type="EMBL" id="FM177946">
    <property type="protein sequence ID" value="CAQ72890.1"/>
    <property type="molecule type" value="mRNA"/>
</dbReference>
<dbReference type="SMR" id="B5U6Y4"/>
<dbReference type="GO" id="GO:0005576">
    <property type="term" value="C:extracellular region"/>
    <property type="evidence" value="ECO:0007669"/>
    <property type="project" value="UniProtKB-SubCell"/>
</dbReference>
<dbReference type="GO" id="GO:0005509">
    <property type="term" value="F:calcium ion binding"/>
    <property type="evidence" value="ECO:0007669"/>
    <property type="project" value="InterPro"/>
</dbReference>
<dbReference type="GO" id="GO:0047498">
    <property type="term" value="F:calcium-dependent phospholipase A2 activity"/>
    <property type="evidence" value="ECO:0007669"/>
    <property type="project" value="TreeGrafter"/>
</dbReference>
<dbReference type="GO" id="GO:0005543">
    <property type="term" value="F:phospholipid binding"/>
    <property type="evidence" value="ECO:0007669"/>
    <property type="project" value="TreeGrafter"/>
</dbReference>
<dbReference type="GO" id="GO:0090729">
    <property type="term" value="F:toxin activity"/>
    <property type="evidence" value="ECO:0007669"/>
    <property type="project" value="UniProtKB-KW"/>
</dbReference>
<dbReference type="GO" id="GO:0050482">
    <property type="term" value="P:arachidonate secretion"/>
    <property type="evidence" value="ECO:0007669"/>
    <property type="project" value="InterPro"/>
</dbReference>
<dbReference type="GO" id="GO:0016042">
    <property type="term" value="P:lipid catabolic process"/>
    <property type="evidence" value="ECO:0007669"/>
    <property type="project" value="InterPro"/>
</dbReference>
<dbReference type="GO" id="GO:0042130">
    <property type="term" value="P:negative regulation of T cell proliferation"/>
    <property type="evidence" value="ECO:0007669"/>
    <property type="project" value="TreeGrafter"/>
</dbReference>
<dbReference type="GO" id="GO:0006644">
    <property type="term" value="P:phospholipid metabolic process"/>
    <property type="evidence" value="ECO:0007669"/>
    <property type="project" value="InterPro"/>
</dbReference>
<dbReference type="CDD" id="cd00125">
    <property type="entry name" value="PLA2c"/>
    <property type="match status" value="1"/>
</dbReference>
<dbReference type="FunFam" id="1.20.90.10:FF:000001">
    <property type="entry name" value="Basic phospholipase A2 homolog"/>
    <property type="match status" value="1"/>
</dbReference>
<dbReference type="Gene3D" id="1.20.90.10">
    <property type="entry name" value="Phospholipase A2 domain"/>
    <property type="match status" value="1"/>
</dbReference>
<dbReference type="InterPro" id="IPR001211">
    <property type="entry name" value="PLipase_A2"/>
</dbReference>
<dbReference type="InterPro" id="IPR033112">
    <property type="entry name" value="PLipase_A2_Asp_AS"/>
</dbReference>
<dbReference type="InterPro" id="IPR016090">
    <property type="entry name" value="PLipase_A2_dom"/>
</dbReference>
<dbReference type="InterPro" id="IPR036444">
    <property type="entry name" value="PLipase_A2_dom_sf"/>
</dbReference>
<dbReference type="InterPro" id="IPR033113">
    <property type="entry name" value="PLipase_A2_His_AS"/>
</dbReference>
<dbReference type="PANTHER" id="PTHR11716">
    <property type="entry name" value="PHOSPHOLIPASE A2 FAMILY MEMBER"/>
    <property type="match status" value="1"/>
</dbReference>
<dbReference type="PANTHER" id="PTHR11716:SF9">
    <property type="entry name" value="PHOSPHOLIPASE A2, MEMBRANE ASSOCIATED"/>
    <property type="match status" value="1"/>
</dbReference>
<dbReference type="Pfam" id="PF00068">
    <property type="entry name" value="Phospholip_A2_1"/>
    <property type="match status" value="1"/>
</dbReference>
<dbReference type="PRINTS" id="PR00389">
    <property type="entry name" value="PHPHLIPASEA2"/>
</dbReference>
<dbReference type="SMART" id="SM00085">
    <property type="entry name" value="PA2c"/>
    <property type="match status" value="1"/>
</dbReference>
<dbReference type="SUPFAM" id="SSF48619">
    <property type="entry name" value="Phospholipase A2, PLA2"/>
    <property type="match status" value="1"/>
</dbReference>
<dbReference type="PROSITE" id="PS00119">
    <property type="entry name" value="PA2_ASP"/>
    <property type="match status" value="1"/>
</dbReference>
<dbReference type="PROSITE" id="PS00118">
    <property type="entry name" value="PA2_HIS"/>
    <property type="match status" value="1"/>
</dbReference>